<comment type="function">
    <text evidence="1">Bifunctional serine/threonine kinase and phosphorylase involved in the regulation of the phosphoenolpyruvate synthase (PEPS) by catalyzing its phosphorylation/dephosphorylation.</text>
</comment>
<comment type="catalytic activity">
    <reaction evidence="1">
        <text>[pyruvate, water dikinase] + ADP = [pyruvate, water dikinase]-phosphate + AMP + H(+)</text>
        <dbReference type="Rhea" id="RHEA:46020"/>
        <dbReference type="Rhea" id="RHEA-COMP:11425"/>
        <dbReference type="Rhea" id="RHEA-COMP:11426"/>
        <dbReference type="ChEBI" id="CHEBI:15378"/>
        <dbReference type="ChEBI" id="CHEBI:43176"/>
        <dbReference type="ChEBI" id="CHEBI:68546"/>
        <dbReference type="ChEBI" id="CHEBI:456215"/>
        <dbReference type="ChEBI" id="CHEBI:456216"/>
        <dbReference type="EC" id="2.7.11.33"/>
    </reaction>
</comment>
<comment type="catalytic activity">
    <reaction evidence="1">
        <text>[pyruvate, water dikinase]-phosphate + phosphate + H(+) = [pyruvate, water dikinase] + diphosphate</text>
        <dbReference type="Rhea" id="RHEA:48580"/>
        <dbReference type="Rhea" id="RHEA-COMP:11425"/>
        <dbReference type="Rhea" id="RHEA-COMP:11426"/>
        <dbReference type="ChEBI" id="CHEBI:15378"/>
        <dbReference type="ChEBI" id="CHEBI:33019"/>
        <dbReference type="ChEBI" id="CHEBI:43176"/>
        <dbReference type="ChEBI" id="CHEBI:43474"/>
        <dbReference type="ChEBI" id="CHEBI:68546"/>
        <dbReference type="EC" id="2.7.4.28"/>
    </reaction>
</comment>
<comment type="similarity">
    <text evidence="1">Belongs to the pyruvate, phosphate/water dikinase regulatory protein family. PSRP subfamily.</text>
</comment>
<comment type="sequence caution" evidence="2">
    <conflict type="erroneous initiation">
        <sequence resource="EMBL-CDS" id="AAO28398"/>
    </conflict>
</comment>
<sequence length="273" mass="30603">MSTIRPVFYVSDGTGITAETIGHSLLTQFSGFTFVAERMVFIDDAEKARDASQRILAASERYRVRPIVVNSCVNPYLSVILAESGALMLDVFAPFIGLLEHELNTSRHSCVGRAHGMVDFETYHRRINAMNFALAHDDGVAASYDEAEVILVAVSRAGKTPTCIYLALHYGIRAANYPLIDEDLNSDQLPLRLRPYRKKLFGLTINPERLQQIRQERRPNSRYAALDTCKREVAAAEQMFSAERITTLSTTHTSIEEISSKVLVTLGLQREMF</sequence>
<name>PSRP_XYLFT</name>
<dbReference type="EC" id="2.7.11.33" evidence="1"/>
<dbReference type="EC" id="2.7.4.28" evidence="1"/>
<dbReference type="EMBL" id="AE009442">
    <property type="protein sequence ID" value="AAO28398.1"/>
    <property type="status" value="ALT_INIT"/>
    <property type="molecule type" value="Genomic_DNA"/>
</dbReference>
<dbReference type="RefSeq" id="WP_004087371.1">
    <property type="nucleotide sequence ID" value="NC_004556.1"/>
</dbReference>
<dbReference type="SMR" id="Q87E04"/>
<dbReference type="KEGG" id="xft:PD_0525"/>
<dbReference type="HOGENOM" id="CLU_046206_1_0_6"/>
<dbReference type="Proteomes" id="UP000002516">
    <property type="component" value="Chromosome"/>
</dbReference>
<dbReference type="GO" id="GO:0043531">
    <property type="term" value="F:ADP binding"/>
    <property type="evidence" value="ECO:0007669"/>
    <property type="project" value="UniProtKB-UniRule"/>
</dbReference>
<dbReference type="GO" id="GO:0005524">
    <property type="term" value="F:ATP binding"/>
    <property type="evidence" value="ECO:0007669"/>
    <property type="project" value="InterPro"/>
</dbReference>
<dbReference type="GO" id="GO:0016776">
    <property type="term" value="F:phosphotransferase activity, phosphate group as acceptor"/>
    <property type="evidence" value="ECO:0007669"/>
    <property type="project" value="UniProtKB-UniRule"/>
</dbReference>
<dbReference type="GO" id="GO:0004674">
    <property type="term" value="F:protein serine/threonine kinase activity"/>
    <property type="evidence" value="ECO:0007669"/>
    <property type="project" value="UniProtKB-UniRule"/>
</dbReference>
<dbReference type="HAMAP" id="MF_01062">
    <property type="entry name" value="PSRP"/>
    <property type="match status" value="1"/>
</dbReference>
<dbReference type="InterPro" id="IPR005177">
    <property type="entry name" value="Kinase-pyrophosphorylase"/>
</dbReference>
<dbReference type="InterPro" id="IPR026530">
    <property type="entry name" value="PSRP"/>
</dbReference>
<dbReference type="NCBIfam" id="NF003742">
    <property type="entry name" value="PRK05339.1"/>
    <property type="match status" value="1"/>
</dbReference>
<dbReference type="PANTHER" id="PTHR31756">
    <property type="entry name" value="PYRUVATE, PHOSPHATE DIKINASE REGULATORY PROTEIN 1, CHLOROPLASTIC"/>
    <property type="match status" value="1"/>
</dbReference>
<dbReference type="PANTHER" id="PTHR31756:SF3">
    <property type="entry name" value="PYRUVATE, PHOSPHATE DIKINASE REGULATORY PROTEIN 1, CHLOROPLASTIC"/>
    <property type="match status" value="1"/>
</dbReference>
<dbReference type="Pfam" id="PF03618">
    <property type="entry name" value="Kinase-PPPase"/>
    <property type="match status" value="1"/>
</dbReference>
<reference key="1">
    <citation type="journal article" date="2003" name="J. Bacteriol.">
        <title>Comparative analyses of the complete genome sequences of Pierce's disease and citrus variegated chlorosis strains of Xylella fastidiosa.</title>
        <authorList>
            <person name="Van Sluys M.A."/>
            <person name="de Oliveira M.C."/>
            <person name="Monteiro-Vitorello C.B."/>
            <person name="Miyaki C.Y."/>
            <person name="Furlan L.R."/>
            <person name="Camargo L.E.A."/>
            <person name="da Silva A.C.R."/>
            <person name="Moon D.H."/>
            <person name="Takita M.A."/>
            <person name="Lemos E.G.M."/>
            <person name="Machado M.A."/>
            <person name="Ferro M.I.T."/>
            <person name="da Silva F.R."/>
            <person name="Goldman M.H.S."/>
            <person name="Goldman G.H."/>
            <person name="Lemos M.V.F."/>
            <person name="El-Dorry H."/>
            <person name="Tsai S.M."/>
            <person name="Carrer H."/>
            <person name="Carraro D.M."/>
            <person name="de Oliveira R.C."/>
            <person name="Nunes L.R."/>
            <person name="Siqueira W.J."/>
            <person name="Coutinho L.L."/>
            <person name="Kimura E.T."/>
            <person name="Ferro E.S."/>
            <person name="Harakava R."/>
            <person name="Kuramae E.E."/>
            <person name="Marino C.L."/>
            <person name="Giglioti E."/>
            <person name="Abreu I.L."/>
            <person name="Alves L.M.C."/>
            <person name="do Amaral A.M."/>
            <person name="Baia G.S."/>
            <person name="Blanco S.R."/>
            <person name="Brito M.S."/>
            <person name="Cannavan F.S."/>
            <person name="Celestino A.V."/>
            <person name="da Cunha A.F."/>
            <person name="Fenille R.C."/>
            <person name="Ferro J.A."/>
            <person name="Formighieri E.F."/>
            <person name="Kishi L.T."/>
            <person name="Leoni S.G."/>
            <person name="Oliveira A.R."/>
            <person name="Rosa V.E. Jr."/>
            <person name="Sassaki F.T."/>
            <person name="Sena J.A.D."/>
            <person name="de Souza A.A."/>
            <person name="Truffi D."/>
            <person name="Tsukumo F."/>
            <person name="Yanai G.M."/>
            <person name="Zaros L.G."/>
            <person name="Civerolo E.L."/>
            <person name="Simpson A.J.G."/>
            <person name="Almeida N.F. Jr."/>
            <person name="Setubal J.C."/>
            <person name="Kitajima J.P."/>
        </authorList>
    </citation>
    <scope>NUCLEOTIDE SEQUENCE [LARGE SCALE GENOMIC DNA]</scope>
    <source>
        <strain>Temecula1 / ATCC 700964</strain>
    </source>
</reference>
<keyword id="KW-0418">Kinase</keyword>
<keyword id="KW-0547">Nucleotide-binding</keyword>
<keyword id="KW-1185">Reference proteome</keyword>
<keyword id="KW-0723">Serine/threonine-protein kinase</keyword>
<keyword id="KW-0808">Transferase</keyword>
<protein>
    <recommendedName>
        <fullName evidence="1">Putative phosphoenolpyruvate synthase regulatory protein</fullName>
        <shortName evidence="1">PEP synthase regulatory protein</shortName>
        <shortName evidence="1">PSRP</shortName>
        <ecNumber evidence="1">2.7.11.33</ecNumber>
        <ecNumber evidence="1">2.7.4.28</ecNumber>
    </recommendedName>
    <alternativeName>
        <fullName evidence="1">Pyruvate, water dikinase regulatory protein</fullName>
    </alternativeName>
</protein>
<feature type="chain" id="PRO_0000196748" description="Putative phosphoenolpyruvate synthase regulatory protein">
    <location>
        <begin position="1"/>
        <end position="273"/>
    </location>
</feature>
<feature type="binding site" evidence="1">
    <location>
        <begin position="153"/>
        <end position="160"/>
    </location>
    <ligand>
        <name>ADP</name>
        <dbReference type="ChEBI" id="CHEBI:456216"/>
    </ligand>
</feature>
<organism>
    <name type="scientific">Xylella fastidiosa (strain Temecula1 / ATCC 700964)</name>
    <dbReference type="NCBI Taxonomy" id="183190"/>
    <lineage>
        <taxon>Bacteria</taxon>
        <taxon>Pseudomonadati</taxon>
        <taxon>Pseudomonadota</taxon>
        <taxon>Gammaproteobacteria</taxon>
        <taxon>Lysobacterales</taxon>
        <taxon>Lysobacteraceae</taxon>
        <taxon>Xylella</taxon>
    </lineage>
</organism>
<proteinExistence type="inferred from homology"/>
<gene>
    <name type="ordered locus">PD_0525</name>
</gene>
<accession>Q87E04</accession>
<evidence type="ECO:0000255" key="1">
    <source>
        <dbReference type="HAMAP-Rule" id="MF_01062"/>
    </source>
</evidence>
<evidence type="ECO:0000305" key="2"/>